<accession>B5L5N1</accession>
<sequence length="75" mass="8355">MSSGGLLLLLGLLTLWAELIPVSGQDHPKKPGLCPPRPQKPPCVRECKNDWSCPGEQKCCRYGCIFECRDPIFVK</sequence>
<evidence type="ECO:0000250" key="1">
    <source>
        <dbReference type="UniProtKB" id="P83952"/>
    </source>
</evidence>
<evidence type="ECO:0000255" key="2"/>
<evidence type="ECO:0000255" key="3">
    <source>
        <dbReference type="PROSITE-ProRule" id="PRU00722"/>
    </source>
</evidence>
<evidence type="ECO:0000303" key="4">
    <source>
    </source>
</evidence>
<evidence type="ECO:0000305" key="5"/>
<evidence type="ECO:0000305" key="6">
    <source>
    </source>
</evidence>
<reference key="1">
    <citation type="journal article" date="2008" name="Cell. Mol. Life Sci.">
        <title>Common evolution of waprin and Kunitz-like toxin families in Australian venomous snakes.</title>
        <authorList>
            <person name="St Pierre L."/>
            <person name="Earl S.T."/>
            <person name="Filippovich I."/>
            <person name="Sorokina N."/>
            <person name="Masci P.P."/>
            <person name="De Jersey J."/>
            <person name="Lavin M.F."/>
        </authorList>
    </citation>
    <scope>NUCLEOTIDE SEQUENCE [GENOMIC DNA]</scope>
    <source>
        <tissue>Venom gland</tissue>
    </source>
</reference>
<proteinExistence type="inferred from homology"/>
<dbReference type="EMBL" id="EU401819">
    <property type="protein sequence ID" value="ACC77768.1"/>
    <property type="molecule type" value="Genomic_DNA"/>
</dbReference>
<dbReference type="SMR" id="B5L5N1"/>
<dbReference type="GO" id="GO:0005576">
    <property type="term" value="C:extracellular region"/>
    <property type="evidence" value="ECO:0000250"/>
    <property type="project" value="UniProtKB"/>
</dbReference>
<dbReference type="GO" id="GO:0005615">
    <property type="term" value="C:extracellular space"/>
    <property type="evidence" value="ECO:0007669"/>
    <property type="project" value="TreeGrafter"/>
</dbReference>
<dbReference type="GO" id="GO:0004867">
    <property type="term" value="F:serine-type endopeptidase inhibitor activity"/>
    <property type="evidence" value="ECO:0007669"/>
    <property type="project" value="TreeGrafter"/>
</dbReference>
<dbReference type="GO" id="GO:0019731">
    <property type="term" value="P:antibacterial humoral response"/>
    <property type="evidence" value="ECO:0007669"/>
    <property type="project" value="TreeGrafter"/>
</dbReference>
<dbReference type="GO" id="GO:0045087">
    <property type="term" value="P:innate immune response"/>
    <property type="evidence" value="ECO:0007669"/>
    <property type="project" value="TreeGrafter"/>
</dbReference>
<dbReference type="GO" id="GO:0044278">
    <property type="term" value="P:venom-mediated disruption of cell wall in another organism"/>
    <property type="evidence" value="ECO:0000250"/>
    <property type="project" value="UniProtKB"/>
</dbReference>
<dbReference type="Gene3D" id="4.10.75.10">
    <property type="entry name" value="Elafin-like"/>
    <property type="match status" value="1"/>
</dbReference>
<dbReference type="InterPro" id="IPR036645">
    <property type="entry name" value="Elafin-like_sf"/>
</dbReference>
<dbReference type="InterPro" id="IPR008197">
    <property type="entry name" value="WAP_dom"/>
</dbReference>
<dbReference type="InterPro" id="IPR050514">
    <property type="entry name" value="WAP_four-disulfide_core"/>
</dbReference>
<dbReference type="PANTHER" id="PTHR19441:SF44">
    <property type="entry name" value="ANTILEUKOPROTEINASE"/>
    <property type="match status" value="1"/>
</dbReference>
<dbReference type="PANTHER" id="PTHR19441">
    <property type="entry name" value="WHEY ACDIC PROTEIN WAP"/>
    <property type="match status" value="1"/>
</dbReference>
<dbReference type="Pfam" id="PF00095">
    <property type="entry name" value="WAP"/>
    <property type="match status" value="1"/>
</dbReference>
<dbReference type="PRINTS" id="PR00003">
    <property type="entry name" value="4DISULPHCORE"/>
</dbReference>
<dbReference type="SMART" id="SM00217">
    <property type="entry name" value="WAP"/>
    <property type="match status" value="1"/>
</dbReference>
<dbReference type="SUPFAM" id="SSF57256">
    <property type="entry name" value="Elafin-like"/>
    <property type="match status" value="1"/>
</dbReference>
<dbReference type="PROSITE" id="PS51390">
    <property type="entry name" value="WAP"/>
    <property type="match status" value="1"/>
</dbReference>
<organism>
    <name type="scientific">Pseudechis australis</name>
    <name type="common">Mulga snake</name>
    <name type="synonym">King brown snake</name>
    <dbReference type="NCBI Taxonomy" id="8670"/>
    <lineage>
        <taxon>Eukaryota</taxon>
        <taxon>Metazoa</taxon>
        <taxon>Chordata</taxon>
        <taxon>Craniata</taxon>
        <taxon>Vertebrata</taxon>
        <taxon>Euteleostomi</taxon>
        <taxon>Lepidosauria</taxon>
        <taxon>Squamata</taxon>
        <taxon>Bifurcata</taxon>
        <taxon>Unidentata</taxon>
        <taxon>Episquamata</taxon>
        <taxon>Toxicofera</taxon>
        <taxon>Serpentes</taxon>
        <taxon>Colubroidea</taxon>
        <taxon>Elapidae</taxon>
        <taxon>Hydrophiinae</taxon>
        <taxon>Pseudechis</taxon>
    </lineage>
</organism>
<keyword id="KW-0044">Antibiotic</keyword>
<keyword id="KW-0929">Antimicrobial</keyword>
<keyword id="KW-1015">Disulfide bond</keyword>
<keyword id="KW-0964">Secreted</keyword>
<keyword id="KW-0732">Signal</keyword>
<name>WAPB_PSEAU</name>
<comment type="function">
    <text evidence="1">Damages membranes of susceptible bacteria. Has no hemolytic activity. Not toxic to mice. Does not inhibit the proteinases elastase and cathepsin G.</text>
</comment>
<comment type="subcellular location">
    <subcellularLocation>
        <location evidence="6">Secreted</location>
    </subcellularLocation>
</comment>
<comment type="tissue specificity">
    <text evidence="6">Expressed by the venom gland.</text>
</comment>
<comment type="similarity">
    <text evidence="5">Belongs to the venom waprin family.</text>
</comment>
<protein>
    <recommendedName>
        <fullName evidence="4">Auswaprin-b</fullName>
    </recommendedName>
</protein>
<feature type="signal peptide" evidence="2">
    <location>
        <begin position="1"/>
        <end position="24"/>
    </location>
</feature>
<feature type="chain" id="PRO_5000395619" description="Auswaprin-b">
    <location>
        <begin position="25"/>
        <end position="75"/>
    </location>
</feature>
<feature type="domain" description="WAP" evidence="3">
    <location>
        <begin position="27"/>
        <end position="72"/>
    </location>
</feature>
<feature type="disulfide bond" evidence="3">
    <location>
        <begin position="34"/>
        <end position="60"/>
    </location>
</feature>
<feature type="disulfide bond" evidence="3">
    <location>
        <begin position="43"/>
        <end position="64"/>
    </location>
</feature>
<feature type="disulfide bond" evidence="3">
    <location>
        <begin position="47"/>
        <end position="59"/>
    </location>
</feature>
<feature type="disulfide bond" evidence="3">
    <location>
        <begin position="53"/>
        <end position="68"/>
    </location>
</feature>